<protein>
    <recommendedName>
        <fullName evidence="1">Putative pre-16S rRNA nuclease</fullName>
        <ecNumber evidence="1">3.1.-.-</ecNumber>
    </recommendedName>
</protein>
<feature type="chain" id="PRO_0000257598" description="Putative pre-16S rRNA nuclease">
    <location>
        <begin position="1"/>
        <end position="142"/>
    </location>
</feature>
<accession>Q49Y54</accession>
<organism>
    <name type="scientific">Staphylococcus saprophyticus subsp. saprophyticus (strain ATCC 15305 / DSM 20229 / NCIMB 8711 / NCTC 7292 / S-41)</name>
    <dbReference type="NCBI Taxonomy" id="342451"/>
    <lineage>
        <taxon>Bacteria</taxon>
        <taxon>Bacillati</taxon>
        <taxon>Bacillota</taxon>
        <taxon>Bacilli</taxon>
        <taxon>Bacillales</taxon>
        <taxon>Staphylococcaceae</taxon>
        <taxon>Staphylococcus</taxon>
    </lineage>
</organism>
<keyword id="KW-0963">Cytoplasm</keyword>
<keyword id="KW-0378">Hydrolase</keyword>
<keyword id="KW-0540">Nuclease</keyword>
<keyword id="KW-1185">Reference proteome</keyword>
<keyword id="KW-0690">Ribosome biogenesis</keyword>
<proteinExistence type="inferred from homology"/>
<reference key="1">
    <citation type="journal article" date="2005" name="Proc. Natl. Acad. Sci. U.S.A.">
        <title>Whole genome sequence of Staphylococcus saprophyticus reveals the pathogenesis of uncomplicated urinary tract infection.</title>
        <authorList>
            <person name="Kuroda M."/>
            <person name="Yamashita A."/>
            <person name="Hirakawa H."/>
            <person name="Kumano M."/>
            <person name="Morikawa K."/>
            <person name="Higashide M."/>
            <person name="Maruyama A."/>
            <person name="Inose Y."/>
            <person name="Matoba K."/>
            <person name="Toh H."/>
            <person name="Kuhara S."/>
            <person name="Hattori M."/>
            <person name="Ohta T."/>
        </authorList>
    </citation>
    <scope>NUCLEOTIDE SEQUENCE [LARGE SCALE GENOMIC DNA]</scope>
    <source>
        <strain>ATCC 15305 / DSM 20229 / NCIMB 8711 / NCTC 7292 / S-41</strain>
    </source>
</reference>
<comment type="function">
    <text evidence="1">Could be a nuclease involved in processing of the 5'-end of pre-16S rRNA.</text>
</comment>
<comment type="subcellular location">
    <subcellularLocation>
        <location evidence="1">Cytoplasm</location>
    </subcellularLocation>
</comment>
<comment type="similarity">
    <text evidence="1">Belongs to the YqgF nuclease family.</text>
</comment>
<gene>
    <name type="ordered locus">SSP1145</name>
</gene>
<dbReference type="EC" id="3.1.-.-" evidence="1"/>
<dbReference type="EMBL" id="AP008934">
    <property type="protein sequence ID" value="BAE18290.1"/>
    <property type="molecule type" value="Genomic_DNA"/>
</dbReference>
<dbReference type="SMR" id="Q49Y54"/>
<dbReference type="KEGG" id="ssp:SSP1145"/>
<dbReference type="eggNOG" id="COG0816">
    <property type="taxonomic scope" value="Bacteria"/>
</dbReference>
<dbReference type="HOGENOM" id="CLU_098240_2_0_9"/>
<dbReference type="OrthoDB" id="9796140at2"/>
<dbReference type="Proteomes" id="UP000006371">
    <property type="component" value="Chromosome"/>
</dbReference>
<dbReference type="GO" id="GO:0005829">
    <property type="term" value="C:cytosol"/>
    <property type="evidence" value="ECO:0007669"/>
    <property type="project" value="TreeGrafter"/>
</dbReference>
<dbReference type="GO" id="GO:0004518">
    <property type="term" value="F:nuclease activity"/>
    <property type="evidence" value="ECO:0007669"/>
    <property type="project" value="UniProtKB-KW"/>
</dbReference>
<dbReference type="GO" id="GO:0000967">
    <property type="term" value="P:rRNA 5'-end processing"/>
    <property type="evidence" value="ECO:0007669"/>
    <property type="project" value="UniProtKB-UniRule"/>
</dbReference>
<dbReference type="CDD" id="cd16964">
    <property type="entry name" value="YqgF"/>
    <property type="match status" value="1"/>
</dbReference>
<dbReference type="FunFam" id="3.30.420.140:FF:000003">
    <property type="entry name" value="Putative pre-16S rRNA nuclease"/>
    <property type="match status" value="1"/>
</dbReference>
<dbReference type="Gene3D" id="3.30.420.140">
    <property type="entry name" value="YqgF/RNase H-like domain"/>
    <property type="match status" value="1"/>
</dbReference>
<dbReference type="HAMAP" id="MF_00651">
    <property type="entry name" value="Nuclease_YqgF"/>
    <property type="match status" value="1"/>
</dbReference>
<dbReference type="InterPro" id="IPR012337">
    <property type="entry name" value="RNaseH-like_sf"/>
</dbReference>
<dbReference type="InterPro" id="IPR005227">
    <property type="entry name" value="YqgF"/>
</dbReference>
<dbReference type="InterPro" id="IPR006641">
    <property type="entry name" value="YqgF/RNaseH-like_dom"/>
</dbReference>
<dbReference type="InterPro" id="IPR037027">
    <property type="entry name" value="YqgF/RNaseH-like_dom_sf"/>
</dbReference>
<dbReference type="NCBIfam" id="TIGR00250">
    <property type="entry name" value="RNAse_H_YqgF"/>
    <property type="match status" value="1"/>
</dbReference>
<dbReference type="PANTHER" id="PTHR33317">
    <property type="entry name" value="POLYNUCLEOTIDYL TRANSFERASE, RIBONUCLEASE H-LIKE SUPERFAMILY PROTEIN"/>
    <property type="match status" value="1"/>
</dbReference>
<dbReference type="PANTHER" id="PTHR33317:SF4">
    <property type="entry name" value="POLYNUCLEOTIDYL TRANSFERASE, RIBONUCLEASE H-LIKE SUPERFAMILY PROTEIN"/>
    <property type="match status" value="1"/>
</dbReference>
<dbReference type="Pfam" id="PF03652">
    <property type="entry name" value="RuvX"/>
    <property type="match status" value="1"/>
</dbReference>
<dbReference type="SMART" id="SM00732">
    <property type="entry name" value="YqgFc"/>
    <property type="match status" value="1"/>
</dbReference>
<dbReference type="SUPFAM" id="SSF53098">
    <property type="entry name" value="Ribonuclease H-like"/>
    <property type="match status" value="1"/>
</dbReference>
<sequence length="142" mass="15811">MLKHKIIGLDVGSKTVGIAISDLMGWTAQGLDTLRIDEENNELGIEALVKIIKRDNVGTVVIGLPKNMNNSIGFRGEASLQYKEQLQEALPSLEIIMWDERLSTMAAERSLLEADVSRQKRKKVIDKMAAVFILQGYLDSLQ</sequence>
<name>YQGF_STAS1</name>
<evidence type="ECO:0000255" key="1">
    <source>
        <dbReference type="HAMAP-Rule" id="MF_00651"/>
    </source>
</evidence>